<sequence>MNNSQGRVTFEDVTVNFTQGEWQRLNPEQRNLYRDVMLENYSNLVSVGQGETTKPDVILRLEQGKEPWLEEEEVLGSGRAEKNGDIGGQIWKPKDVKESLAREVPSINKETLTTQKGVECDGSKKILPLGIDDVSSLQHYVQNNSHDDNGYRKLVGNNPSKFVGQQLKCNACRKLFSSKSRLQSHLRRHACQKPFECHSCGRAFGEKWKLDKHQKTHAEERPYKCENCGNAYKQKSNLFQHQKMHTKEKPYQCKTCGKAFSWKSSCINHEKIHNAKKSYQCNECEKSFRQNSTLIQHKKVHTGQKPFQCTDCGKAFIYKSDLVKHQRIHTGEKPYKCSICEKAFSQKSNVIDHEKIHTGKRAYECDLCGNTFIQKKNLIQHKKIHTGEKPYECNRCGKAFFQKSNLHSHQKTHSGERTYRCSECGKTFIRKLNLSLHKKTHTGQKPYGCSECGKAFADRSYLVRHQKRIHSR</sequence>
<dbReference type="EMBL" id="AF365931">
    <property type="protein sequence ID" value="AAL11635.1"/>
    <property type="molecule type" value="mRNA"/>
</dbReference>
<dbReference type="EMBL" id="BC114446">
    <property type="protein sequence ID" value="AAI14447.1"/>
    <property type="molecule type" value="mRNA"/>
</dbReference>
<dbReference type="EMBL" id="BC114503">
    <property type="protein sequence ID" value="AAI14504.1"/>
    <property type="molecule type" value="mRNA"/>
</dbReference>
<dbReference type="CCDS" id="CCDS33125.1"/>
<dbReference type="RefSeq" id="NP_443114.1">
    <property type="nucleotide sequence ID" value="NM_052882.1"/>
</dbReference>
<dbReference type="SMR" id="Q96PE6"/>
<dbReference type="BioGRID" id="125268">
    <property type="interactions" value="4"/>
</dbReference>
<dbReference type="IntAct" id="Q96PE6">
    <property type="interactions" value="13"/>
</dbReference>
<dbReference type="STRING" id="9606.ENSP00000269834"/>
<dbReference type="iPTMnet" id="Q96PE6"/>
<dbReference type="PhosphoSitePlus" id="Q96PE6"/>
<dbReference type="BioMuta" id="ZIM3"/>
<dbReference type="DMDM" id="20141013"/>
<dbReference type="jPOST" id="Q96PE6"/>
<dbReference type="MassIVE" id="Q96PE6"/>
<dbReference type="PaxDb" id="9606-ENSP00000269834"/>
<dbReference type="PeptideAtlas" id="Q96PE6"/>
<dbReference type="ProteomicsDB" id="77684"/>
<dbReference type="Antibodypedia" id="33234">
    <property type="antibodies" value="35 antibodies from 17 providers"/>
</dbReference>
<dbReference type="DNASU" id="114026"/>
<dbReference type="Ensembl" id="ENST00000269834.1">
    <property type="protein sequence ID" value="ENSP00000269834.1"/>
    <property type="gene ID" value="ENSG00000141946.1"/>
</dbReference>
<dbReference type="GeneID" id="114026"/>
<dbReference type="KEGG" id="hsa:114026"/>
<dbReference type="MANE-Select" id="ENST00000269834.1">
    <property type="protein sequence ID" value="ENSP00000269834.1"/>
    <property type="RefSeq nucleotide sequence ID" value="NM_052882.1"/>
    <property type="RefSeq protein sequence ID" value="NP_443114.1"/>
</dbReference>
<dbReference type="UCSC" id="uc002qnz.1">
    <property type="organism name" value="human"/>
</dbReference>
<dbReference type="AGR" id="HGNC:16366"/>
<dbReference type="CTD" id="114026"/>
<dbReference type="GeneCards" id="ZIM3"/>
<dbReference type="HGNC" id="HGNC:16366">
    <property type="gene designation" value="ZIM3"/>
</dbReference>
<dbReference type="HPA" id="ENSG00000141946">
    <property type="expression patterns" value="Not detected"/>
</dbReference>
<dbReference type="neXtProt" id="NX_Q96PE6"/>
<dbReference type="OpenTargets" id="ENSG00000141946"/>
<dbReference type="PharmGKB" id="PA38127"/>
<dbReference type="VEuPathDB" id="HostDB:ENSG00000141946"/>
<dbReference type="eggNOG" id="KOG1721">
    <property type="taxonomic scope" value="Eukaryota"/>
</dbReference>
<dbReference type="GeneTree" id="ENSGT00940000164284"/>
<dbReference type="HOGENOM" id="CLU_002678_0_12_1"/>
<dbReference type="InParanoid" id="Q96PE6"/>
<dbReference type="OMA" id="WKSSCIN"/>
<dbReference type="OrthoDB" id="6077919at2759"/>
<dbReference type="PAN-GO" id="Q96PE6">
    <property type="GO annotations" value="4 GO annotations based on evolutionary models"/>
</dbReference>
<dbReference type="PhylomeDB" id="Q96PE6"/>
<dbReference type="TreeFam" id="TF337055"/>
<dbReference type="PathwayCommons" id="Q96PE6"/>
<dbReference type="Reactome" id="R-HSA-212436">
    <property type="pathway name" value="Generic Transcription Pathway"/>
</dbReference>
<dbReference type="BioGRID-ORCS" id="114026">
    <property type="hits" value="10 hits in 1164 CRISPR screens"/>
</dbReference>
<dbReference type="GenomeRNAi" id="114026"/>
<dbReference type="Pharos" id="Q96PE6">
    <property type="development level" value="Tdark"/>
</dbReference>
<dbReference type="PRO" id="PR:Q96PE6"/>
<dbReference type="Proteomes" id="UP000005640">
    <property type="component" value="Chromosome 19"/>
</dbReference>
<dbReference type="RNAct" id="Q96PE6">
    <property type="molecule type" value="protein"/>
</dbReference>
<dbReference type="Bgee" id="ENSG00000141946">
    <property type="expression patterns" value="Expressed in male germ line stem cell (sensu Vertebrata) in testis and 2 other cell types or tissues"/>
</dbReference>
<dbReference type="GO" id="GO:0005634">
    <property type="term" value="C:nucleus"/>
    <property type="evidence" value="ECO:0000318"/>
    <property type="project" value="GO_Central"/>
</dbReference>
<dbReference type="GO" id="GO:0000981">
    <property type="term" value="F:DNA-binding transcription factor activity, RNA polymerase II-specific"/>
    <property type="evidence" value="ECO:0000318"/>
    <property type="project" value="GO_Central"/>
</dbReference>
<dbReference type="GO" id="GO:0000978">
    <property type="term" value="F:RNA polymerase II cis-regulatory region sequence-specific DNA binding"/>
    <property type="evidence" value="ECO:0000318"/>
    <property type="project" value="GO_Central"/>
</dbReference>
<dbReference type="GO" id="GO:0008270">
    <property type="term" value="F:zinc ion binding"/>
    <property type="evidence" value="ECO:0007669"/>
    <property type="project" value="UniProtKB-KW"/>
</dbReference>
<dbReference type="GO" id="GO:0006357">
    <property type="term" value="P:regulation of transcription by RNA polymerase II"/>
    <property type="evidence" value="ECO:0000318"/>
    <property type="project" value="GO_Central"/>
</dbReference>
<dbReference type="CDD" id="cd07765">
    <property type="entry name" value="KRAB_A-box"/>
    <property type="match status" value="1"/>
</dbReference>
<dbReference type="FunFam" id="3.30.160.60:FF:002880">
    <property type="entry name" value="Zinc finger imprinted 3"/>
    <property type="match status" value="1"/>
</dbReference>
<dbReference type="FunFam" id="3.30.160.60:FF:004055">
    <property type="entry name" value="Zinc finger imprinted 3"/>
    <property type="match status" value="1"/>
</dbReference>
<dbReference type="FunFam" id="3.30.160.60:FF:000240">
    <property type="entry name" value="Zinc finger protein 250"/>
    <property type="match status" value="1"/>
</dbReference>
<dbReference type="FunFam" id="3.30.160.60:FF:002343">
    <property type="entry name" value="Zinc finger protein 33A"/>
    <property type="match status" value="1"/>
</dbReference>
<dbReference type="FunFam" id="3.30.160.60:FF:001498">
    <property type="entry name" value="Zinc finger protein 404"/>
    <property type="match status" value="1"/>
</dbReference>
<dbReference type="FunFam" id="3.30.160.60:FF:001532">
    <property type="entry name" value="Zinc finger protein 483"/>
    <property type="match status" value="1"/>
</dbReference>
<dbReference type="FunFam" id="3.30.160.60:FF:001174">
    <property type="entry name" value="zinc finger protein 527 isoform X1"/>
    <property type="match status" value="1"/>
</dbReference>
<dbReference type="FunFam" id="3.30.160.60:FF:001437">
    <property type="entry name" value="Zinc finger protein 594"/>
    <property type="match status" value="1"/>
</dbReference>
<dbReference type="FunFam" id="3.30.160.60:FF:000098">
    <property type="entry name" value="Zinc finger protein 614"/>
    <property type="match status" value="1"/>
</dbReference>
<dbReference type="FunFam" id="3.30.160.60:FF:002604">
    <property type="entry name" value="Zinc finger protein 715"/>
    <property type="match status" value="1"/>
</dbReference>
<dbReference type="FunFam" id="3.30.160.60:FF:001157">
    <property type="entry name" value="Zinc finger protein 793"/>
    <property type="match status" value="1"/>
</dbReference>
<dbReference type="Gene3D" id="6.10.140.140">
    <property type="match status" value="1"/>
</dbReference>
<dbReference type="Gene3D" id="3.30.160.60">
    <property type="entry name" value="Classic Zinc Finger"/>
    <property type="match status" value="11"/>
</dbReference>
<dbReference type="InterPro" id="IPR050717">
    <property type="entry name" value="C2H2-ZF_Transcription_Reg"/>
</dbReference>
<dbReference type="InterPro" id="IPR001909">
    <property type="entry name" value="KRAB"/>
</dbReference>
<dbReference type="InterPro" id="IPR036051">
    <property type="entry name" value="KRAB_dom_sf"/>
</dbReference>
<dbReference type="InterPro" id="IPR036236">
    <property type="entry name" value="Znf_C2H2_sf"/>
</dbReference>
<dbReference type="InterPro" id="IPR013087">
    <property type="entry name" value="Znf_C2H2_type"/>
</dbReference>
<dbReference type="PANTHER" id="PTHR14196">
    <property type="entry name" value="ODD-SKIPPED - RELATED"/>
    <property type="match status" value="1"/>
</dbReference>
<dbReference type="PANTHER" id="PTHR14196:SF12">
    <property type="entry name" value="ZINC FINGER PROTEIN 208-LIKE"/>
    <property type="match status" value="1"/>
</dbReference>
<dbReference type="Pfam" id="PF01352">
    <property type="entry name" value="KRAB"/>
    <property type="match status" value="1"/>
</dbReference>
<dbReference type="Pfam" id="PF00096">
    <property type="entry name" value="zf-C2H2"/>
    <property type="match status" value="9"/>
</dbReference>
<dbReference type="SMART" id="SM00349">
    <property type="entry name" value="KRAB"/>
    <property type="match status" value="1"/>
</dbReference>
<dbReference type="SMART" id="SM00355">
    <property type="entry name" value="ZnF_C2H2"/>
    <property type="match status" value="11"/>
</dbReference>
<dbReference type="SUPFAM" id="SSF57667">
    <property type="entry name" value="beta-beta-alpha zinc fingers"/>
    <property type="match status" value="6"/>
</dbReference>
<dbReference type="SUPFAM" id="SSF109640">
    <property type="entry name" value="KRAB domain (Kruppel-associated box)"/>
    <property type="match status" value="1"/>
</dbReference>
<dbReference type="PROSITE" id="PS50805">
    <property type="entry name" value="KRAB"/>
    <property type="match status" value="1"/>
</dbReference>
<dbReference type="PROSITE" id="PS00028">
    <property type="entry name" value="ZINC_FINGER_C2H2_1"/>
    <property type="match status" value="11"/>
</dbReference>
<dbReference type="PROSITE" id="PS50157">
    <property type="entry name" value="ZINC_FINGER_C2H2_2"/>
    <property type="match status" value="11"/>
</dbReference>
<comment type="function">
    <text>May be involved in transcriptional regulation.</text>
</comment>
<comment type="interaction">
    <interactant intactId="EBI-18199075">
        <id>Q96PE6</id>
    </interactant>
    <interactant intactId="EBI-11742507">
        <id>Q8TAP4-4</id>
        <label>LMO3</label>
    </interactant>
    <organismsDiffer>false</organismsDiffer>
    <experiments>3</experiments>
</comment>
<comment type="interaction">
    <interactant intactId="EBI-18199075">
        <id>Q96PE6</id>
    </interactant>
    <interactant intactId="EBI-752313">
        <id>Q06587</id>
        <label>RING1</label>
    </interactant>
    <organismsDiffer>false</organismsDiffer>
    <experiments>3</experiments>
</comment>
<comment type="subcellular location">
    <subcellularLocation>
        <location evidence="3">Nucleus</location>
    </subcellularLocation>
</comment>
<comment type="similarity">
    <text evidence="3">Belongs to the krueppel C2H2-type zinc-finger protein family.</text>
</comment>
<evidence type="ECO:0000255" key="1">
    <source>
        <dbReference type="PROSITE-ProRule" id="PRU00042"/>
    </source>
</evidence>
<evidence type="ECO:0000255" key="2">
    <source>
        <dbReference type="PROSITE-ProRule" id="PRU00119"/>
    </source>
</evidence>
<evidence type="ECO:0000305" key="3"/>
<feature type="chain" id="PRO_0000047775" description="Zinc finger imprinted 3">
    <location>
        <begin position="1"/>
        <end position="472"/>
    </location>
</feature>
<feature type="domain" description="KRAB" evidence="2">
    <location>
        <begin position="8"/>
        <end position="80"/>
    </location>
</feature>
<feature type="zinc finger region" description="C2H2-type 1" evidence="1">
    <location>
        <begin position="167"/>
        <end position="189"/>
    </location>
</feature>
<feature type="zinc finger region" description="C2H2-type 2" evidence="1">
    <location>
        <begin position="195"/>
        <end position="217"/>
    </location>
</feature>
<feature type="zinc finger region" description="C2H2-type 3" evidence="1">
    <location>
        <begin position="223"/>
        <end position="245"/>
    </location>
</feature>
<feature type="zinc finger region" description="C2H2-type 4" evidence="1">
    <location>
        <begin position="251"/>
        <end position="273"/>
    </location>
</feature>
<feature type="zinc finger region" description="C2H2-type 5" evidence="1">
    <location>
        <begin position="279"/>
        <end position="301"/>
    </location>
</feature>
<feature type="zinc finger region" description="C2H2-type 6" evidence="1">
    <location>
        <begin position="307"/>
        <end position="329"/>
    </location>
</feature>
<feature type="zinc finger region" description="C2H2-type 7" evidence="1">
    <location>
        <begin position="335"/>
        <end position="357"/>
    </location>
</feature>
<feature type="zinc finger region" description="C2H2-type 8" evidence="1">
    <location>
        <begin position="363"/>
        <end position="385"/>
    </location>
</feature>
<feature type="zinc finger region" description="C2H2-type 9" evidence="1">
    <location>
        <begin position="391"/>
        <end position="413"/>
    </location>
</feature>
<feature type="zinc finger region" description="C2H2-type 10" evidence="1">
    <location>
        <begin position="419"/>
        <end position="441"/>
    </location>
</feature>
<feature type="zinc finger region" description="C2H2-type 11" evidence="1">
    <location>
        <begin position="447"/>
        <end position="470"/>
    </location>
</feature>
<feature type="sequence variant" id="VAR_024222" description="In dbSNP:rs10407445.">
    <original>R</original>
    <variation>K</variation>
    <location>
        <position position="7"/>
    </location>
</feature>
<feature type="sequence variant" id="VAR_024223" description="In dbSNP:rs2370134.">
    <original>E</original>
    <variation>K</variation>
    <location>
        <position position="28"/>
    </location>
</feature>
<feature type="sequence variant" id="VAR_033599" description="In dbSNP:rs4801200.">
    <original>L</original>
    <variation>M</variation>
    <location>
        <position position="69"/>
    </location>
</feature>
<feature type="sequence variant" id="VAR_024224" description="In dbSNP:rs7252632.">
    <original>N</original>
    <variation>D</variation>
    <location>
        <position position="157"/>
    </location>
</feature>
<feature type="sequence variant" id="VAR_052933" description="In dbSNP:rs35202951.">
    <original>G</original>
    <variation>R</variation>
    <location>
        <position position="205"/>
    </location>
</feature>
<feature type="sequence variant" id="VAR_024225" description="In dbSNP:rs4801433.">
    <original>I</original>
    <variation>V</variation>
    <location>
        <position position="379"/>
    </location>
</feature>
<reference key="1">
    <citation type="journal article" date="2001" name="Genomics">
        <title>Imprinting and evolution of two Kruppel-type zinc-finger genes, ZIM3 and ZNF264, located in the PEG3/USP29 imprinted domain.</title>
        <authorList>
            <person name="Kim J."/>
            <person name="Bergmann A."/>
            <person name="Wehri E."/>
            <person name="Lu X."/>
            <person name="Stubbs L."/>
        </authorList>
    </citation>
    <scope>NUCLEOTIDE SEQUENCE [MRNA]</scope>
</reference>
<reference key="2">
    <citation type="journal article" date="2004" name="Genome Res.">
        <title>The status, quality, and expansion of the NIH full-length cDNA project: the Mammalian Gene Collection (MGC).</title>
        <authorList>
            <consortium name="The MGC Project Team"/>
        </authorList>
    </citation>
    <scope>NUCLEOTIDE SEQUENCE [LARGE SCALE MRNA]</scope>
</reference>
<keyword id="KW-0238">DNA-binding</keyword>
<keyword id="KW-0479">Metal-binding</keyword>
<keyword id="KW-0539">Nucleus</keyword>
<keyword id="KW-1185">Reference proteome</keyword>
<keyword id="KW-0677">Repeat</keyword>
<keyword id="KW-0804">Transcription</keyword>
<keyword id="KW-0805">Transcription regulation</keyword>
<keyword id="KW-0862">Zinc</keyword>
<keyword id="KW-0863">Zinc-finger</keyword>
<name>ZIM3_HUMAN</name>
<gene>
    <name type="primary">ZIM3</name>
    <name type="synonym">ZNF657</name>
</gene>
<proteinExistence type="evidence at protein level"/>
<organism>
    <name type="scientific">Homo sapiens</name>
    <name type="common">Human</name>
    <dbReference type="NCBI Taxonomy" id="9606"/>
    <lineage>
        <taxon>Eukaryota</taxon>
        <taxon>Metazoa</taxon>
        <taxon>Chordata</taxon>
        <taxon>Craniata</taxon>
        <taxon>Vertebrata</taxon>
        <taxon>Euteleostomi</taxon>
        <taxon>Mammalia</taxon>
        <taxon>Eutheria</taxon>
        <taxon>Euarchontoglires</taxon>
        <taxon>Primates</taxon>
        <taxon>Haplorrhini</taxon>
        <taxon>Catarrhini</taxon>
        <taxon>Hominidae</taxon>
        <taxon>Homo</taxon>
    </lineage>
</organism>
<protein>
    <recommendedName>
        <fullName>Zinc finger imprinted 3</fullName>
    </recommendedName>
    <alternativeName>
        <fullName>Zinc finger protein 657</fullName>
    </alternativeName>
</protein>
<accession>Q96PE6</accession>
<accession>Q14CA6</accession>